<name>NADK_PSEP1</name>
<accession>A5W6U4</accession>
<sequence length="296" mass="32466">MEQFRNIGIIGRLGSSQVLDTIRRLKKFLLDRHLHVILEDTIAEVLPGHGLQTSTRKLLGEVCDLVIVVGGDGSLLGAARALARHNIPVLGINRGNLGFLTDIRPDELEQKVAEVLDGHYLVENRFLLQAEVRRHHEAIGQGDALNDVVLHPGKSTRMIEFEIYIDGQFVCSQKADGLIVATPTGSTAYALSAGGPIMHPKLDAIVIVPMYPHTLSGRPIVVDGNSELKIVVSKDLQIYPQVSCDGQNHFTCAPGDTITVSKKPQKLRLIHPLDHNYYEVCRTKLGWGSRLGSSDD</sequence>
<organism>
    <name type="scientific">Pseudomonas putida (strain ATCC 700007 / DSM 6899 / JCM 31910 / BCRC 17059 / LMG 24140 / F1)</name>
    <dbReference type="NCBI Taxonomy" id="351746"/>
    <lineage>
        <taxon>Bacteria</taxon>
        <taxon>Pseudomonadati</taxon>
        <taxon>Pseudomonadota</taxon>
        <taxon>Gammaproteobacteria</taxon>
        <taxon>Pseudomonadales</taxon>
        <taxon>Pseudomonadaceae</taxon>
        <taxon>Pseudomonas</taxon>
    </lineage>
</organism>
<dbReference type="EC" id="2.7.1.23" evidence="1"/>
<dbReference type="EMBL" id="CP000712">
    <property type="protein sequence ID" value="ABQ79854.1"/>
    <property type="molecule type" value="Genomic_DNA"/>
</dbReference>
<dbReference type="SMR" id="A5W6U4"/>
<dbReference type="KEGG" id="ppf:Pput_3730"/>
<dbReference type="eggNOG" id="COG0061">
    <property type="taxonomic scope" value="Bacteria"/>
</dbReference>
<dbReference type="HOGENOM" id="CLU_008831_0_1_6"/>
<dbReference type="GO" id="GO:0005737">
    <property type="term" value="C:cytoplasm"/>
    <property type="evidence" value="ECO:0007669"/>
    <property type="project" value="UniProtKB-SubCell"/>
</dbReference>
<dbReference type="GO" id="GO:0005524">
    <property type="term" value="F:ATP binding"/>
    <property type="evidence" value="ECO:0007669"/>
    <property type="project" value="UniProtKB-KW"/>
</dbReference>
<dbReference type="GO" id="GO:0046872">
    <property type="term" value="F:metal ion binding"/>
    <property type="evidence" value="ECO:0007669"/>
    <property type="project" value="UniProtKB-UniRule"/>
</dbReference>
<dbReference type="GO" id="GO:0051287">
    <property type="term" value="F:NAD binding"/>
    <property type="evidence" value="ECO:0007669"/>
    <property type="project" value="UniProtKB-ARBA"/>
</dbReference>
<dbReference type="GO" id="GO:0003951">
    <property type="term" value="F:NAD+ kinase activity"/>
    <property type="evidence" value="ECO:0007669"/>
    <property type="project" value="UniProtKB-UniRule"/>
</dbReference>
<dbReference type="GO" id="GO:0019674">
    <property type="term" value="P:NAD metabolic process"/>
    <property type="evidence" value="ECO:0007669"/>
    <property type="project" value="InterPro"/>
</dbReference>
<dbReference type="GO" id="GO:0006741">
    <property type="term" value="P:NADP biosynthetic process"/>
    <property type="evidence" value="ECO:0007669"/>
    <property type="project" value="UniProtKB-UniRule"/>
</dbReference>
<dbReference type="FunFam" id="2.60.200.30:FF:000001">
    <property type="entry name" value="NAD kinase"/>
    <property type="match status" value="1"/>
</dbReference>
<dbReference type="Gene3D" id="3.40.50.10330">
    <property type="entry name" value="Probable inorganic polyphosphate/atp-NAD kinase, domain 1"/>
    <property type="match status" value="1"/>
</dbReference>
<dbReference type="Gene3D" id="2.60.200.30">
    <property type="entry name" value="Probable inorganic polyphosphate/atp-NAD kinase, domain 2"/>
    <property type="match status" value="1"/>
</dbReference>
<dbReference type="HAMAP" id="MF_00361">
    <property type="entry name" value="NAD_kinase"/>
    <property type="match status" value="1"/>
</dbReference>
<dbReference type="InterPro" id="IPR017438">
    <property type="entry name" value="ATP-NAD_kinase_N"/>
</dbReference>
<dbReference type="InterPro" id="IPR017437">
    <property type="entry name" value="ATP-NAD_kinase_PpnK-typ_C"/>
</dbReference>
<dbReference type="InterPro" id="IPR016064">
    <property type="entry name" value="NAD/diacylglycerol_kinase_sf"/>
</dbReference>
<dbReference type="InterPro" id="IPR002504">
    <property type="entry name" value="NADK"/>
</dbReference>
<dbReference type="NCBIfam" id="NF002306">
    <property type="entry name" value="PRK01231.1"/>
    <property type="match status" value="1"/>
</dbReference>
<dbReference type="PANTHER" id="PTHR20275">
    <property type="entry name" value="NAD KINASE"/>
    <property type="match status" value="1"/>
</dbReference>
<dbReference type="PANTHER" id="PTHR20275:SF0">
    <property type="entry name" value="NAD KINASE"/>
    <property type="match status" value="1"/>
</dbReference>
<dbReference type="Pfam" id="PF01513">
    <property type="entry name" value="NAD_kinase"/>
    <property type="match status" value="1"/>
</dbReference>
<dbReference type="Pfam" id="PF20143">
    <property type="entry name" value="NAD_kinase_C"/>
    <property type="match status" value="1"/>
</dbReference>
<dbReference type="SUPFAM" id="SSF111331">
    <property type="entry name" value="NAD kinase/diacylglycerol kinase-like"/>
    <property type="match status" value="1"/>
</dbReference>
<proteinExistence type="inferred from homology"/>
<keyword id="KW-0067">ATP-binding</keyword>
<keyword id="KW-0963">Cytoplasm</keyword>
<keyword id="KW-0418">Kinase</keyword>
<keyword id="KW-0520">NAD</keyword>
<keyword id="KW-0521">NADP</keyword>
<keyword id="KW-0547">Nucleotide-binding</keyword>
<keyword id="KW-0808">Transferase</keyword>
<evidence type="ECO:0000255" key="1">
    <source>
        <dbReference type="HAMAP-Rule" id="MF_00361"/>
    </source>
</evidence>
<protein>
    <recommendedName>
        <fullName evidence="1">NAD kinase</fullName>
        <ecNumber evidence="1">2.7.1.23</ecNumber>
    </recommendedName>
    <alternativeName>
        <fullName evidence="1">ATP-dependent NAD kinase</fullName>
    </alternativeName>
</protein>
<reference key="1">
    <citation type="submission" date="2007-05" db="EMBL/GenBank/DDBJ databases">
        <title>Complete sequence of Pseudomonas putida F1.</title>
        <authorList>
            <consortium name="US DOE Joint Genome Institute"/>
            <person name="Copeland A."/>
            <person name="Lucas S."/>
            <person name="Lapidus A."/>
            <person name="Barry K."/>
            <person name="Detter J.C."/>
            <person name="Glavina del Rio T."/>
            <person name="Hammon N."/>
            <person name="Israni S."/>
            <person name="Dalin E."/>
            <person name="Tice H."/>
            <person name="Pitluck S."/>
            <person name="Chain P."/>
            <person name="Malfatti S."/>
            <person name="Shin M."/>
            <person name="Vergez L."/>
            <person name="Schmutz J."/>
            <person name="Larimer F."/>
            <person name="Land M."/>
            <person name="Hauser L."/>
            <person name="Kyrpides N."/>
            <person name="Lykidis A."/>
            <person name="Parales R."/>
            <person name="Richardson P."/>
        </authorList>
    </citation>
    <scope>NUCLEOTIDE SEQUENCE [LARGE SCALE GENOMIC DNA]</scope>
    <source>
        <strain>ATCC 700007 / DSM 6899 / JCM 31910 / BCRC 17059 / LMG 24140 / F1</strain>
    </source>
</reference>
<comment type="function">
    <text evidence="1">Involved in the regulation of the intracellular balance of NAD and NADP, and is a key enzyme in the biosynthesis of NADP. Catalyzes specifically the phosphorylation on 2'-hydroxyl of the adenosine moiety of NAD to yield NADP.</text>
</comment>
<comment type="catalytic activity">
    <reaction evidence="1">
        <text>NAD(+) + ATP = ADP + NADP(+) + H(+)</text>
        <dbReference type="Rhea" id="RHEA:18629"/>
        <dbReference type="ChEBI" id="CHEBI:15378"/>
        <dbReference type="ChEBI" id="CHEBI:30616"/>
        <dbReference type="ChEBI" id="CHEBI:57540"/>
        <dbReference type="ChEBI" id="CHEBI:58349"/>
        <dbReference type="ChEBI" id="CHEBI:456216"/>
        <dbReference type="EC" id="2.7.1.23"/>
    </reaction>
</comment>
<comment type="cofactor">
    <cofactor evidence="1">
        <name>a divalent metal cation</name>
        <dbReference type="ChEBI" id="CHEBI:60240"/>
    </cofactor>
</comment>
<comment type="subcellular location">
    <subcellularLocation>
        <location evidence="1">Cytoplasm</location>
    </subcellularLocation>
</comment>
<comment type="similarity">
    <text evidence="1">Belongs to the NAD kinase family.</text>
</comment>
<gene>
    <name evidence="1" type="primary">nadK</name>
    <name type="ordered locus">Pput_3730</name>
</gene>
<feature type="chain" id="PRO_1000005432" description="NAD kinase">
    <location>
        <begin position="1"/>
        <end position="296"/>
    </location>
</feature>
<feature type="active site" description="Proton acceptor" evidence="1">
    <location>
        <position position="72"/>
    </location>
</feature>
<feature type="binding site" evidence="1">
    <location>
        <begin position="72"/>
        <end position="73"/>
    </location>
    <ligand>
        <name>NAD(+)</name>
        <dbReference type="ChEBI" id="CHEBI:57540"/>
    </ligand>
</feature>
<feature type="binding site" evidence="1">
    <location>
        <begin position="146"/>
        <end position="147"/>
    </location>
    <ligand>
        <name>NAD(+)</name>
        <dbReference type="ChEBI" id="CHEBI:57540"/>
    </ligand>
</feature>
<feature type="binding site" evidence="1">
    <location>
        <position position="157"/>
    </location>
    <ligand>
        <name>NAD(+)</name>
        <dbReference type="ChEBI" id="CHEBI:57540"/>
    </ligand>
</feature>
<feature type="binding site" evidence="1">
    <location>
        <position position="174"/>
    </location>
    <ligand>
        <name>NAD(+)</name>
        <dbReference type="ChEBI" id="CHEBI:57540"/>
    </ligand>
</feature>
<feature type="binding site" evidence="1">
    <location>
        <position position="176"/>
    </location>
    <ligand>
        <name>NAD(+)</name>
        <dbReference type="ChEBI" id="CHEBI:57540"/>
    </ligand>
</feature>
<feature type="binding site" evidence="1">
    <location>
        <begin position="187"/>
        <end position="192"/>
    </location>
    <ligand>
        <name>NAD(+)</name>
        <dbReference type="ChEBI" id="CHEBI:57540"/>
    </ligand>
</feature>
<feature type="binding site" evidence="1">
    <location>
        <position position="247"/>
    </location>
    <ligand>
        <name>NAD(+)</name>
        <dbReference type="ChEBI" id="CHEBI:57540"/>
    </ligand>
</feature>